<accession>Q9CCR5</accession>
<feature type="chain" id="PRO_0000113160" description="Aspartate carbamoyltransferase catalytic subunit">
    <location>
        <begin position="1"/>
        <end position="321"/>
    </location>
</feature>
<feature type="binding site" evidence="1">
    <location>
        <position position="57"/>
    </location>
    <ligand>
        <name>carbamoyl phosphate</name>
        <dbReference type="ChEBI" id="CHEBI:58228"/>
    </ligand>
</feature>
<feature type="binding site" evidence="1">
    <location>
        <position position="58"/>
    </location>
    <ligand>
        <name>carbamoyl phosphate</name>
        <dbReference type="ChEBI" id="CHEBI:58228"/>
    </ligand>
</feature>
<feature type="binding site" evidence="1">
    <location>
        <position position="85"/>
    </location>
    <ligand>
        <name>L-aspartate</name>
        <dbReference type="ChEBI" id="CHEBI:29991"/>
    </ligand>
</feature>
<feature type="binding site" evidence="1">
    <location>
        <position position="107"/>
    </location>
    <ligand>
        <name>carbamoyl phosphate</name>
        <dbReference type="ChEBI" id="CHEBI:58228"/>
    </ligand>
</feature>
<feature type="binding site" evidence="1">
    <location>
        <position position="142"/>
    </location>
    <ligand>
        <name>carbamoyl phosphate</name>
        <dbReference type="ChEBI" id="CHEBI:58228"/>
    </ligand>
</feature>
<feature type="binding site" evidence="1">
    <location>
        <position position="145"/>
    </location>
    <ligand>
        <name>carbamoyl phosphate</name>
        <dbReference type="ChEBI" id="CHEBI:58228"/>
    </ligand>
</feature>
<feature type="binding site" evidence="1">
    <location>
        <position position="175"/>
    </location>
    <ligand>
        <name>L-aspartate</name>
        <dbReference type="ChEBI" id="CHEBI:29991"/>
    </ligand>
</feature>
<feature type="binding site" evidence="1">
    <location>
        <position position="229"/>
    </location>
    <ligand>
        <name>L-aspartate</name>
        <dbReference type="ChEBI" id="CHEBI:29991"/>
    </ligand>
</feature>
<feature type="binding site" evidence="1">
    <location>
        <position position="270"/>
    </location>
    <ligand>
        <name>carbamoyl phosphate</name>
        <dbReference type="ChEBI" id="CHEBI:58228"/>
    </ligand>
</feature>
<feature type="binding site" evidence="1">
    <location>
        <position position="271"/>
    </location>
    <ligand>
        <name>carbamoyl phosphate</name>
        <dbReference type="ChEBI" id="CHEBI:58228"/>
    </ligand>
</feature>
<protein>
    <recommendedName>
        <fullName evidence="1">Aspartate carbamoyltransferase catalytic subunit</fullName>
        <ecNumber evidence="1">2.1.3.2</ecNumber>
    </recommendedName>
    <alternativeName>
        <fullName evidence="1">Aspartate transcarbamylase</fullName>
        <shortName evidence="1">ATCase</shortName>
    </alternativeName>
</protein>
<evidence type="ECO:0000255" key="1">
    <source>
        <dbReference type="HAMAP-Rule" id="MF_00001"/>
    </source>
</evidence>
<evidence type="ECO:0000305" key="2"/>
<keyword id="KW-0665">Pyrimidine biosynthesis</keyword>
<keyword id="KW-1185">Reference proteome</keyword>
<keyword id="KW-0808">Transferase</keyword>
<name>PYRB_MYCLE</name>
<reference key="1">
    <citation type="journal article" date="2001" name="Nature">
        <title>Massive gene decay in the leprosy bacillus.</title>
        <authorList>
            <person name="Cole S.T."/>
            <person name="Eiglmeier K."/>
            <person name="Parkhill J."/>
            <person name="James K.D."/>
            <person name="Thomson N.R."/>
            <person name="Wheeler P.R."/>
            <person name="Honore N."/>
            <person name="Garnier T."/>
            <person name="Churcher C.M."/>
            <person name="Harris D.E."/>
            <person name="Mungall K.L."/>
            <person name="Basham D."/>
            <person name="Brown D."/>
            <person name="Chillingworth T."/>
            <person name="Connor R."/>
            <person name="Davies R.M."/>
            <person name="Devlin K."/>
            <person name="Duthoy S."/>
            <person name="Feltwell T."/>
            <person name="Fraser A."/>
            <person name="Hamlin N."/>
            <person name="Holroyd S."/>
            <person name="Hornsby T."/>
            <person name="Jagels K."/>
            <person name="Lacroix C."/>
            <person name="Maclean J."/>
            <person name="Moule S."/>
            <person name="Murphy L.D."/>
            <person name="Oliver K."/>
            <person name="Quail M.A."/>
            <person name="Rajandream M.A."/>
            <person name="Rutherford K.M."/>
            <person name="Rutter S."/>
            <person name="Seeger K."/>
            <person name="Simon S."/>
            <person name="Simmonds M."/>
            <person name="Skelton J."/>
            <person name="Squares R."/>
            <person name="Squares S."/>
            <person name="Stevens K."/>
            <person name="Taylor K."/>
            <person name="Whitehead S."/>
            <person name="Woodward J.R."/>
            <person name="Barrell B.G."/>
        </authorList>
    </citation>
    <scope>NUCLEOTIDE SEQUENCE [LARGE SCALE GENOMIC DNA]</scope>
    <source>
        <strain>TN</strain>
    </source>
</reference>
<organism>
    <name type="scientific">Mycobacterium leprae (strain TN)</name>
    <dbReference type="NCBI Taxonomy" id="272631"/>
    <lineage>
        <taxon>Bacteria</taxon>
        <taxon>Bacillati</taxon>
        <taxon>Actinomycetota</taxon>
        <taxon>Actinomycetes</taxon>
        <taxon>Mycobacteriales</taxon>
        <taxon>Mycobacteriaceae</taxon>
        <taxon>Mycobacterium</taxon>
    </lineage>
</organism>
<sequence>MMRRHLLNAGDLSRDDAIAIFDDADRFAHALVGREIKKLPTLRGRTVITMFYENSTRTRVSFEVAGKWMSANVINVSPAGSSVGKGESLRDTALTLRAAGADALIIRHPASGAAHLLADWTAAETGEDGPAVINAGDGTHEHPTQALLDALTIRQRLGSIEGRRILIVGDILHSRVARSNVVLLDTLGAEVVLVAPRTLLPIGVDGWPATVSCDFDAELPAADAVLMLRVQAERMNGGFFPSVREYSCLYGLTERRQALLPGHAVVLHPGPMLRGMEIASSVADSSQSAVLQQVSNGVHVRMAVLFHVLVGTQSAEEEGAA</sequence>
<comment type="function">
    <text evidence="1">Catalyzes the condensation of carbamoyl phosphate and aspartate to form carbamoyl aspartate and inorganic phosphate, the committed step in the de novo pyrimidine nucleotide biosynthesis pathway.</text>
</comment>
<comment type="catalytic activity">
    <reaction evidence="1">
        <text>carbamoyl phosphate + L-aspartate = N-carbamoyl-L-aspartate + phosphate + H(+)</text>
        <dbReference type="Rhea" id="RHEA:20013"/>
        <dbReference type="ChEBI" id="CHEBI:15378"/>
        <dbReference type="ChEBI" id="CHEBI:29991"/>
        <dbReference type="ChEBI" id="CHEBI:32814"/>
        <dbReference type="ChEBI" id="CHEBI:43474"/>
        <dbReference type="ChEBI" id="CHEBI:58228"/>
        <dbReference type="EC" id="2.1.3.2"/>
    </reaction>
</comment>
<comment type="pathway">
    <text evidence="1">Pyrimidine metabolism; UMP biosynthesis via de novo pathway; (S)-dihydroorotate from bicarbonate: step 2/3.</text>
</comment>
<comment type="subunit">
    <text evidence="1">Heterododecamer (2C3:3R2) of six catalytic PyrB chains organized as two trimers (C3), and six regulatory PyrI chains organized as three dimers (R2).</text>
</comment>
<comment type="similarity">
    <text evidence="1 2">Belongs to the aspartate/ornithine carbamoyltransferase superfamily. ATCase family.</text>
</comment>
<dbReference type="EC" id="2.1.3.2" evidence="1"/>
<dbReference type="EMBL" id="AL583918">
    <property type="protein sequence ID" value="CAC30040.1"/>
    <property type="molecule type" value="Genomic_DNA"/>
</dbReference>
<dbReference type="PIR" id="D86975">
    <property type="entry name" value="D86975"/>
</dbReference>
<dbReference type="RefSeq" id="NP_301452.1">
    <property type="nucleotide sequence ID" value="NC_002677.1"/>
</dbReference>
<dbReference type="RefSeq" id="WP_010907776.1">
    <property type="nucleotide sequence ID" value="NC_002677.1"/>
</dbReference>
<dbReference type="SMR" id="Q9CCR5"/>
<dbReference type="STRING" id="272631.gene:17574353"/>
<dbReference type="KEGG" id="mle:ML0532"/>
<dbReference type="PATRIC" id="fig|272631.5.peg.932"/>
<dbReference type="Leproma" id="ML0532"/>
<dbReference type="eggNOG" id="COG0540">
    <property type="taxonomic scope" value="Bacteria"/>
</dbReference>
<dbReference type="HOGENOM" id="CLU_043846_2_0_11"/>
<dbReference type="OrthoDB" id="9774690at2"/>
<dbReference type="UniPathway" id="UPA00070">
    <property type="reaction ID" value="UER00116"/>
</dbReference>
<dbReference type="Proteomes" id="UP000000806">
    <property type="component" value="Chromosome"/>
</dbReference>
<dbReference type="GO" id="GO:0005829">
    <property type="term" value="C:cytosol"/>
    <property type="evidence" value="ECO:0007669"/>
    <property type="project" value="TreeGrafter"/>
</dbReference>
<dbReference type="GO" id="GO:0016597">
    <property type="term" value="F:amino acid binding"/>
    <property type="evidence" value="ECO:0007669"/>
    <property type="project" value="InterPro"/>
</dbReference>
<dbReference type="GO" id="GO:0004070">
    <property type="term" value="F:aspartate carbamoyltransferase activity"/>
    <property type="evidence" value="ECO:0007669"/>
    <property type="project" value="UniProtKB-UniRule"/>
</dbReference>
<dbReference type="GO" id="GO:0006207">
    <property type="term" value="P:'de novo' pyrimidine nucleobase biosynthetic process"/>
    <property type="evidence" value="ECO:0007669"/>
    <property type="project" value="InterPro"/>
</dbReference>
<dbReference type="GO" id="GO:0044205">
    <property type="term" value="P:'de novo' UMP biosynthetic process"/>
    <property type="evidence" value="ECO:0007669"/>
    <property type="project" value="UniProtKB-UniRule"/>
</dbReference>
<dbReference type="GO" id="GO:0006520">
    <property type="term" value="P:amino acid metabolic process"/>
    <property type="evidence" value="ECO:0007669"/>
    <property type="project" value="InterPro"/>
</dbReference>
<dbReference type="FunFam" id="3.40.50.1370:FF:000007">
    <property type="entry name" value="Aspartate carbamoyltransferase"/>
    <property type="match status" value="1"/>
</dbReference>
<dbReference type="Gene3D" id="3.40.50.1370">
    <property type="entry name" value="Aspartate/ornithine carbamoyltransferase"/>
    <property type="match status" value="2"/>
</dbReference>
<dbReference type="HAMAP" id="MF_00001">
    <property type="entry name" value="Asp_carb_tr"/>
    <property type="match status" value="1"/>
</dbReference>
<dbReference type="InterPro" id="IPR006132">
    <property type="entry name" value="Asp/Orn_carbamoyltranf_P-bd"/>
</dbReference>
<dbReference type="InterPro" id="IPR006130">
    <property type="entry name" value="Asp/Orn_carbamoylTrfase"/>
</dbReference>
<dbReference type="InterPro" id="IPR036901">
    <property type="entry name" value="Asp/Orn_carbamoylTrfase_sf"/>
</dbReference>
<dbReference type="InterPro" id="IPR002082">
    <property type="entry name" value="Asp_carbamoyltransf"/>
</dbReference>
<dbReference type="InterPro" id="IPR006131">
    <property type="entry name" value="Asp_carbamoyltransf_Asp/Orn-bd"/>
</dbReference>
<dbReference type="NCBIfam" id="TIGR00670">
    <property type="entry name" value="asp_carb_tr"/>
    <property type="match status" value="1"/>
</dbReference>
<dbReference type="NCBIfam" id="NF002032">
    <property type="entry name" value="PRK00856.1"/>
    <property type="match status" value="1"/>
</dbReference>
<dbReference type="PANTHER" id="PTHR45753:SF6">
    <property type="entry name" value="ASPARTATE CARBAMOYLTRANSFERASE"/>
    <property type="match status" value="1"/>
</dbReference>
<dbReference type="PANTHER" id="PTHR45753">
    <property type="entry name" value="ORNITHINE CARBAMOYLTRANSFERASE, MITOCHONDRIAL"/>
    <property type="match status" value="1"/>
</dbReference>
<dbReference type="Pfam" id="PF00185">
    <property type="entry name" value="OTCace"/>
    <property type="match status" value="1"/>
</dbReference>
<dbReference type="Pfam" id="PF02729">
    <property type="entry name" value="OTCace_N"/>
    <property type="match status" value="1"/>
</dbReference>
<dbReference type="PRINTS" id="PR00100">
    <property type="entry name" value="AOTCASE"/>
</dbReference>
<dbReference type="PRINTS" id="PR00101">
    <property type="entry name" value="ATCASE"/>
</dbReference>
<dbReference type="SUPFAM" id="SSF53671">
    <property type="entry name" value="Aspartate/ornithine carbamoyltransferase"/>
    <property type="match status" value="1"/>
</dbReference>
<dbReference type="PROSITE" id="PS00097">
    <property type="entry name" value="CARBAMOYLTRANSFERASE"/>
    <property type="match status" value="1"/>
</dbReference>
<gene>
    <name evidence="1" type="primary">pyrB</name>
    <name type="ordered locus">ML0532</name>
</gene>
<proteinExistence type="inferred from homology"/>